<evidence type="ECO:0000250" key="1"/>
<evidence type="ECO:0000305" key="2"/>
<keyword id="KW-0028">Amino-acid biosynthesis</keyword>
<keyword id="KW-0057">Aromatic amino acid biosynthesis</keyword>
<keyword id="KW-0456">Lyase</keyword>
<keyword id="KW-1185">Reference proteome</keyword>
<gene>
    <name type="primary">aroQ1</name>
    <name type="synonym">aroQ-1</name>
    <name type="ordered locus">PP_0560</name>
</gene>
<sequence>MATLLVLHGPNLNLLGTREPGHYGAVTLAQINQDLEQRARAAGHHLLYLQSNAEYELIDRIHAARNEGVDFILINPAAFTHTSVALRDALLAVSIPFIEVHLSNVHKREPFRHHSYFSDVAVGVICGLGASGYRLALESALEQLAANAQPK</sequence>
<accession>Q88QD4</accession>
<dbReference type="EC" id="4.2.1.10"/>
<dbReference type="EMBL" id="AE015451">
    <property type="protein sequence ID" value="AAN66187.1"/>
    <property type="molecule type" value="Genomic_DNA"/>
</dbReference>
<dbReference type="RefSeq" id="NP_742723.1">
    <property type="nucleotide sequence ID" value="NC_002947.4"/>
</dbReference>
<dbReference type="SMR" id="Q88QD4"/>
<dbReference type="STRING" id="160488.PP_0560"/>
<dbReference type="PaxDb" id="160488-PP_0560"/>
<dbReference type="KEGG" id="ppu:PP_0560"/>
<dbReference type="PATRIC" id="fig|160488.4.peg.598"/>
<dbReference type="eggNOG" id="COG0757">
    <property type="taxonomic scope" value="Bacteria"/>
</dbReference>
<dbReference type="HOGENOM" id="CLU_090968_1_0_6"/>
<dbReference type="OrthoDB" id="9790793at2"/>
<dbReference type="PhylomeDB" id="Q88QD4"/>
<dbReference type="BioCyc" id="PPUT160488:G1G01-610-MONOMER"/>
<dbReference type="UniPathway" id="UPA00053">
    <property type="reaction ID" value="UER00086"/>
</dbReference>
<dbReference type="Proteomes" id="UP000000556">
    <property type="component" value="Chromosome"/>
</dbReference>
<dbReference type="GO" id="GO:0003855">
    <property type="term" value="F:3-dehydroquinate dehydratase activity"/>
    <property type="evidence" value="ECO:0007669"/>
    <property type="project" value="UniProtKB-UniRule"/>
</dbReference>
<dbReference type="GO" id="GO:0008652">
    <property type="term" value="P:amino acid biosynthetic process"/>
    <property type="evidence" value="ECO:0007669"/>
    <property type="project" value="UniProtKB-KW"/>
</dbReference>
<dbReference type="GO" id="GO:0009073">
    <property type="term" value="P:aromatic amino acid family biosynthetic process"/>
    <property type="evidence" value="ECO:0007669"/>
    <property type="project" value="UniProtKB-KW"/>
</dbReference>
<dbReference type="GO" id="GO:0009423">
    <property type="term" value="P:chorismate biosynthetic process"/>
    <property type="evidence" value="ECO:0007669"/>
    <property type="project" value="UniProtKB-UniRule"/>
</dbReference>
<dbReference type="GO" id="GO:0019631">
    <property type="term" value="P:quinate catabolic process"/>
    <property type="evidence" value="ECO:0007669"/>
    <property type="project" value="TreeGrafter"/>
</dbReference>
<dbReference type="CDD" id="cd00466">
    <property type="entry name" value="DHQase_II"/>
    <property type="match status" value="1"/>
</dbReference>
<dbReference type="Gene3D" id="3.40.50.9100">
    <property type="entry name" value="Dehydroquinase, class II"/>
    <property type="match status" value="1"/>
</dbReference>
<dbReference type="HAMAP" id="MF_00169">
    <property type="entry name" value="AroQ"/>
    <property type="match status" value="1"/>
</dbReference>
<dbReference type="InterPro" id="IPR001874">
    <property type="entry name" value="DHquinase_II"/>
</dbReference>
<dbReference type="InterPro" id="IPR018509">
    <property type="entry name" value="DHquinase_II_CS"/>
</dbReference>
<dbReference type="InterPro" id="IPR036441">
    <property type="entry name" value="DHquinase_II_sf"/>
</dbReference>
<dbReference type="NCBIfam" id="TIGR01088">
    <property type="entry name" value="aroQ"/>
    <property type="match status" value="1"/>
</dbReference>
<dbReference type="NCBIfam" id="NF003804">
    <property type="entry name" value="PRK05395.1-1"/>
    <property type="match status" value="1"/>
</dbReference>
<dbReference type="NCBIfam" id="NF003805">
    <property type="entry name" value="PRK05395.1-2"/>
    <property type="match status" value="1"/>
</dbReference>
<dbReference type="NCBIfam" id="NF003806">
    <property type="entry name" value="PRK05395.1-3"/>
    <property type="match status" value="1"/>
</dbReference>
<dbReference type="NCBIfam" id="NF003807">
    <property type="entry name" value="PRK05395.1-4"/>
    <property type="match status" value="1"/>
</dbReference>
<dbReference type="PANTHER" id="PTHR21272">
    <property type="entry name" value="CATABOLIC 3-DEHYDROQUINASE"/>
    <property type="match status" value="1"/>
</dbReference>
<dbReference type="PANTHER" id="PTHR21272:SF3">
    <property type="entry name" value="CATABOLIC 3-DEHYDROQUINASE"/>
    <property type="match status" value="1"/>
</dbReference>
<dbReference type="Pfam" id="PF01220">
    <property type="entry name" value="DHquinase_II"/>
    <property type="match status" value="1"/>
</dbReference>
<dbReference type="PIRSF" id="PIRSF001399">
    <property type="entry name" value="DHquinase_II"/>
    <property type="match status" value="1"/>
</dbReference>
<dbReference type="SUPFAM" id="SSF52304">
    <property type="entry name" value="Type II 3-dehydroquinate dehydratase"/>
    <property type="match status" value="1"/>
</dbReference>
<dbReference type="PROSITE" id="PS01029">
    <property type="entry name" value="DEHYDROQUINASE_II"/>
    <property type="match status" value="1"/>
</dbReference>
<reference key="1">
    <citation type="journal article" date="2002" name="Environ. Microbiol.">
        <title>Complete genome sequence and comparative analysis of the metabolically versatile Pseudomonas putida KT2440.</title>
        <authorList>
            <person name="Nelson K.E."/>
            <person name="Weinel C."/>
            <person name="Paulsen I.T."/>
            <person name="Dodson R.J."/>
            <person name="Hilbert H."/>
            <person name="Martins dos Santos V.A.P."/>
            <person name="Fouts D.E."/>
            <person name="Gill S.R."/>
            <person name="Pop M."/>
            <person name="Holmes M."/>
            <person name="Brinkac L.M."/>
            <person name="Beanan M.J."/>
            <person name="DeBoy R.T."/>
            <person name="Daugherty S.C."/>
            <person name="Kolonay J.F."/>
            <person name="Madupu R."/>
            <person name="Nelson W.C."/>
            <person name="White O."/>
            <person name="Peterson J.D."/>
            <person name="Khouri H.M."/>
            <person name="Hance I."/>
            <person name="Chris Lee P."/>
            <person name="Holtzapple E.K."/>
            <person name="Scanlan D."/>
            <person name="Tran K."/>
            <person name="Moazzez A."/>
            <person name="Utterback T.R."/>
            <person name="Rizzo M."/>
            <person name="Lee K."/>
            <person name="Kosack D."/>
            <person name="Moestl D."/>
            <person name="Wedler H."/>
            <person name="Lauber J."/>
            <person name="Stjepandic D."/>
            <person name="Hoheisel J."/>
            <person name="Straetz M."/>
            <person name="Heim S."/>
            <person name="Kiewitz C."/>
            <person name="Eisen J.A."/>
            <person name="Timmis K.N."/>
            <person name="Duesterhoeft A."/>
            <person name="Tuemmler B."/>
            <person name="Fraser C.M."/>
        </authorList>
    </citation>
    <scope>NUCLEOTIDE SEQUENCE [LARGE SCALE GENOMIC DNA]</scope>
    <source>
        <strain>ATCC 47054 / DSM 6125 / CFBP 8728 / NCIMB 11950 / KT2440</strain>
    </source>
</reference>
<comment type="function">
    <text evidence="1">Catalyzes a trans-dehydration via an enolate intermediate.</text>
</comment>
<comment type="catalytic activity">
    <reaction>
        <text>3-dehydroquinate = 3-dehydroshikimate + H2O</text>
        <dbReference type="Rhea" id="RHEA:21096"/>
        <dbReference type="ChEBI" id="CHEBI:15377"/>
        <dbReference type="ChEBI" id="CHEBI:16630"/>
        <dbReference type="ChEBI" id="CHEBI:32364"/>
        <dbReference type="EC" id="4.2.1.10"/>
    </reaction>
</comment>
<comment type="pathway">
    <text>Metabolic intermediate biosynthesis; chorismate biosynthesis; chorismate from D-erythrose 4-phosphate and phosphoenolpyruvate: step 3/7.</text>
</comment>
<comment type="subunit">
    <text evidence="1">Homododecamer.</text>
</comment>
<comment type="similarity">
    <text evidence="2">Belongs to the type-II 3-dehydroquinase family.</text>
</comment>
<feature type="chain" id="PRO_0000159920" description="3-dehydroquinate dehydratase 1">
    <location>
        <begin position="1"/>
        <end position="151"/>
    </location>
</feature>
<feature type="active site" description="Proton acceptor" evidence="1">
    <location>
        <position position="23"/>
    </location>
</feature>
<feature type="active site" description="Proton donor" evidence="1">
    <location>
        <position position="101"/>
    </location>
</feature>
<feature type="binding site" evidence="1">
    <location>
        <position position="75"/>
    </location>
    <ligand>
        <name>substrate</name>
    </ligand>
</feature>
<feature type="binding site" evidence="1">
    <location>
        <position position="81"/>
    </location>
    <ligand>
        <name>substrate</name>
    </ligand>
</feature>
<feature type="binding site" evidence="1">
    <location>
        <position position="88"/>
    </location>
    <ligand>
        <name>substrate</name>
    </ligand>
</feature>
<feature type="binding site" evidence="1">
    <location>
        <begin position="102"/>
        <end position="103"/>
    </location>
    <ligand>
        <name>substrate</name>
    </ligand>
</feature>
<feature type="binding site" evidence="1">
    <location>
        <position position="112"/>
    </location>
    <ligand>
        <name>substrate</name>
    </ligand>
</feature>
<feature type="site" description="Transition state stabilizer" evidence="1">
    <location>
        <position position="18"/>
    </location>
</feature>
<proteinExistence type="inferred from homology"/>
<organism>
    <name type="scientific">Pseudomonas putida (strain ATCC 47054 / DSM 6125 / CFBP 8728 / NCIMB 11950 / KT2440)</name>
    <dbReference type="NCBI Taxonomy" id="160488"/>
    <lineage>
        <taxon>Bacteria</taxon>
        <taxon>Pseudomonadati</taxon>
        <taxon>Pseudomonadota</taxon>
        <taxon>Gammaproteobacteria</taxon>
        <taxon>Pseudomonadales</taxon>
        <taxon>Pseudomonadaceae</taxon>
        <taxon>Pseudomonas</taxon>
    </lineage>
</organism>
<name>AROQ1_PSEPK</name>
<protein>
    <recommendedName>
        <fullName>3-dehydroquinate dehydratase 1</fullName>
        <shortName>3-dehydroquinase 1</shortName>
        <ecNumber>4.2.1.10</ecNumber>
    </recommendedName>
    <alternativeName>
        <fullName>Type II DHQase 1</fullName>
    </alternativeName>
</protein>